<keyword id="KW-0113">Calvin cycle</keyword>
<keyword id="KW-0120">Carbon dioxide fixation</keyword>
<keyword id="KW-0150">Chloroplast</keyword>
<keyword id="KW-0601">Photorespiration</keyword>
<keyword id="KW-0602">Photosynthesis</keyword>
<keyword id="KW-0934">Plastid</keyword>
<keyword id="KW-1185">Reference proteome</keyword>
<keyword id="KW-0809">Transit peptide</keyword>
<reference key="1">
    <citation type="journal article" date="1988" name="Plant Cell Physiol.">
        <title>Classification and nucleotide sequence of cDNA encoding the small subunit of ribulose-1,5-bisphosphate carboxylase from rice.</title>
        <authorList>
            <person name="Matsuoka M."/>
            <person name="Kano-Murakami Y."/>
            <person name="Tanaka Y."/>
            <person name="Ozeki Y."/>
            <person name="Yamamoto N."/>
        </authorList>
    </citation>
    <scope>NUCLEOTIDE SEQUENCE [MRNA]</scope>
    <source>
        <strain>cv. Nipponbare</strain>
    </source>
</reference>
<reference key="2">
    <citation type="journal article" date="2005" name="J. Zhejiang Univ. Sci. Ed.">
        <title>Cloning and characterization of a full-length cDNA encoding the RuBPCase small subunit (rbcS) in rice (Oryza sativa L.).</title>
        <authorList>
            <person name="Xiang T."/>
        </authorList>
    </citation>
    <scope>NUCLEOTIDE SEQUENCE [MRNA]</scope>
</reference>
<reference key="3">
    <citation type="journal article" date="2005" name="BMC Biol.">
        <title>The sequence of rice chromosomes 11 and 12, rich in disease resistance genes and recent gene duplications.</title>
        <authorList>
            <consortium name="The rice chromosomes 11 and 12 sequencing consortia"/>
        </authorList>
    </citation>
    <scope>NUCLEOTIDE SEQUENCE [LARGE SCALE GENOMIC DNA]</scope>
    <source>
        <strain>cv. Nipponbare</strain>
    </source>
</reference>
<reference key="4">
    <citation type="journal article" date="2005" name="Nature">
        <title>The map-based sequence of the rice genome.</title>
        <authorList>
            <consortium name="International rice genome sequencing project (IRGSP)"/>
        </authorList>
    </citation>
    <scope>NUCLEOTIDE SEQUENCE [LARGE SCALE GENOMIC DNA]</scope>
    <source>
        <strain>cv. Nipponbare</strain>
    </source>
</reference>
<reference key="5">
    <citation type="journal article" date="2008" name="Nucleic Acids Res.">
        <title>The rice annotation project database (RAP-DB): 2008 update.</title>
        <authorList>
            <consortium name="The rice annotation project (RAP)"/>
        </authorList>
    </citation>
    <scope>GENOME REANNOTATION</scope>
    <source>
        <strain>cv. Nipponbare</strain>
    </source>
</reference>
<reference key="6">
    <citation type="journal article" date="2013" name="Rice">
        <title>Improvement of the Oryza sativa Nipponbare reference genome using next generation sequence and optical map data.</title>
        <authorList>
            <person name="Kawahara Y."/>
            <person name="de la Bastide M."/>
            <person name="Hamilton J.P."/>
            <person name="Kanamori H."/>
            <person name="McCombie W.R."/>
            <person name="Ouyang S."/>
            <person name="Schwartz D.C."/>
            <person name="Tanaka T."/>
            <person name="Wu J."/>
            <person name="Zhou S."/>
            <person name="Childs K.L."/>
            <person name="Davidson R.M."/>
            <person name="Lin H."/>
            <person name="Quesada-Ocampo L."/>
            <person name="Vaillancourt B."/>
            <person name="Sakai H."/>
            <person name="Lee S.S."/>
            <person name="Kim J."/>
            <person name="Numa H."/>
            <person name="Itoh T."/>
            <person name="Buell C.R."/>
            <person name="Matsumoto T."/>
        </authorList>
    </citation>
    <scope>GENOME REANNOTATION</scope>
    <source>
        <strain>cv. Nipponbare</strain>
    </source>
</reference>
<reference key="7">
    <citation type="journal article" date="2005" name="PLoS Biol.">
        <title>The genomes of Oryza sativa: a history of duplications.</title>
        <authorList>
            <person name="Yu J."/>
            <person name="Wang J."/>
            <person name="Lin W."/>
            <person name="Li S."/>
            <person name="Li H."/>
            <person name="Zhou J."/>
            <person name="Ni P."/>
            <person name="Dong W."/>
            <person name="Hu S."/>
            <person name="Zeng C."/>
            <person name="Zhang J."/>
            <person name="Zhang Y."/>
            <person name="Li R."/>
            <person name="Xu Z."/>
            <person name="Li S."/>
            <person name="Li X."/>
            <person name="Zheng H."/>
            <person name="Cong L."/>
            <person name="Lin L."/>
            <person name="Yin J."/>
            <person name="Geng J."/>
            <person name="Li G."/>
            <person name="Shi J."/>
            <person name="Liu J."/>
            <person name="Lv H."/>
            <person name="Li J."/>
            <person name="Wang J."/>
            <person name="Deng Y."/>
            <person name="Ran L."/>
            <person name="Shi X."/>
            <person name="Wang X."/>
            <person name="Wu Q."/>
            <person name="Li C."/>
            <person name="Ren X."/>
            <person name="Wang J."/>
            <person name="Wang X."/>
            <person name="Li D."/>
            <person name="Liu D."/>
            <person name="Zhang X."/>
            <person name="Ji Z."/>
            <person name="Zhao W."/>
            <person name="Sun Y."/>
            <person name="Zhang Z."/>
            <person name="Bao J."/>
            <person name="Han Y."/>
            <person name="Dong L."/>
            <person name="Ji J."/>
            <person name="Chen P."/>
            <person name="Wu S."/>
            <person name="Liu J."/>
            <person name="Xiao Y."/>
            <person name="Bu D."/>
            <person name="Tan J."/>
            <person name="Yang L."/>
            <person name="Ye C."/>
            <person name="Zhang J."/>
            <person name="Xu J."/>
            <person name="Zhou Y."/>
            <person name="Yu Y."/>
            <person name="Zhang B."/>
            <person name="Zhuang S."/>
            <person name="Wei H."/>
            <person name="Liu B."/>
            <person name="Lei M."/>
            <person name="Yu H."/>
            <person name="Li Y."/>
            <person name="Xu H."/>
            <person name="Wei S."/>
            <person name="He X."/>
            <person name="Fang L."/>
            <person name="Zhang Z."/>
            <person name="Zhang Y."/>
            <person name="Huang X."/>
            <person name="Su Z."/>
            <person name="Tong W."/>
            <person name="Li J."/>
            <person name="Tong Z."/>
            <person name="Li S."/>
            <person name="Ye J."/>
            <person name="Wang L."/>
            <person name="Fang L."/>
            <person name="Lei T."/>
            <person name="Chen C.-S."/>
            <person name="Chen H.-C."/>
            <person name="Xu Z."/>
            <person name="Li H."/>
            <person name="Huang H."/>
            <person name="Zhang F."/>
            <person name="Xu H."/>
            <person name="Li N."/>
            <person name="Zhao C."/>
            <person name="Li S."/>
            <person name="Dong L."/>
            <person name="Huang Y."/>
            <person name="Li L."/>
            <person name="Xi Y."/>
            <person name="Qi Q."/>
            <person name="Li W."/>
            <person name="Zhang B."/>
            <person name="Hu W."/>
            <person name="Zhang Y."/>
            <person name="Tian X."/>
            <person name="Jiao Y."/>
            <person name="Liang X."/>
            <person name="Jin J."/>
            <person name="Gao L."/>
            <person name="Zheng W."/>
            <person name="Hao B."/>
            <person name="Liu S.-M."/>
            <person name="Wang W."/>
            <person name="Yuan L."/>
            <person name="Cao M."/>
            <person name="McDermott J."/>
            <person name="Samudrala R."/>
            <person name="Wang J."/>
            <person name="Wong G.K.-S."/>
            <person name="Yang H."/>
        </authorList>
    </citation>
    <scope>NUCLEOTIDE SEQUENCE [LARGE SCALE GENOMIC DNA]</scope>
    <source>
        <strain>cv. Nipponbare</strain>
    </source>
</reference>
<gene>
    <name evidence="1" type="primary">RBCS1</name>
    <name type="synonym">RBCS-A</name>
    <name type="ordered locus">Os12g0291100</name>
    <name type="ordered locus">LOC_Os12g19381</name>
    <name type="ordered locus">LOC_Os12g19394</name>
</gene>
<organism>
    <name type="scientific">Oryza sativa subsp. japonica</name>
    <name type="common">Rice</name>
    <dbReference type="NCBI Taxonomy" id="39947"/>
    <lineage>
        <taxon>Eukaryota</taxon>
        <taxon>Viridiplantae</taxon>
        <taxon>Streptophyta</taxon>
        <taxon>Embryophyta</taxon>
        <taxon>Tracheophyta</taxon>
        <taxon>Spermatophyta</taxon>
        <taxon>Magnoliopsida</taxon>
        <taxon>Liliopsida</taxon>
        <taxon>Poales</taxon>
        <taxon>Poaceae</taxon>
        <taxon>BOP clade</taxon>
        <taxon>Oryzoideae</taxon>
        <taxon>Oryzeae</taxon>
        <taxon>Oryzinae</taxon>
        <taxon>Oryza</taxon>
        <taxon>Oryza sativa</taxon>
    </lineage>
</organism>
<name>RBS2_ORYSJ</name>
<proteinExistence type="evidence at transcript level"/>
<protein>
    <recommendedName>
        <fullName evidence="1">Ribulose bisphosphate carboxylase small subunit, chloroplastic 2</fullName>
        <shortName evidence="1">RuBisCO small subunit 2</shortName>
    </recommendedName>
    <alternativeName>
        <fullName>Ribulose bisphosphate carboxylase small chain A, chloroplastic</fullName>
        <shortName>RuBisCO small subunit A</shortName>
    </alternativeName>
</protein>
<sequence length="175" mass="19631">MAPTVMASSATSVAPFQGLKSTAGLPVSRRSTNSGFGNVSNGGRIKCMQVWPIEGIKKFETLSYLPPLTVEDLLKQIEYLLRSKWVPCLEFSKVGFVYRENHRSPGYYDGRYWTMWKLPMFGCTDATQVLKELEEAKKAYPDAFVRIIGFDNVRQVQLISFIAYKPPGCEESGGN</sequence>
<feature type="transit peptide" description="Chloroplast" evidence="1">
    <location>
        <begin position="1"/>
        <end position="46"/>
    </location>
</feature>
<feature type="chain" id="PRO_0000031538" description="Ribulose bisphosphate carboxylase small subunit, chloroplastic 2" evidence="1">
    <location>
        <begin position="47"/>
        <end position="175"/>
    </location>
</feature>
<feature type="sequence conflict" description="In Ref. 1; BAA00539." evidence="2" ref="1">
    <original>C</original>
    <variation>F</variation>
    <location>
        <position position="47"/>
    </location>
</feature>
<feature type="sequence conflict" description="In Ref. 1; BAA00539." evidence="2" ref="1">
    <original>V</original>
    <variation>I</variation>
    <location>
        <position position="145"/>
    </location>
</feature>
<evidence type="ECO:0000255" key="1">
    <source>
        <dbReference type="HAMAP-Rule" id="MF_00860"/>
    </source>
</evidence>
<evidence type="ECO:0000305" key="2"/>
<dbReference type="EMBL" id="D00644">
    <property type="protein sequence ID" value="BAA00539.1"/>
    <property type="molecule type" value="mRNA"/>
</dbReference>
<dbReference type="EMBL" id="AY445627">
    <property type="protein sequence ID" value="AAR19268.1"/>
    <property type="molecule type" value="mRNA"/>
</dbReference>
<dbReference type="EMBL" id="DP000011">
    <property type="protein sequence ID" value="ABA97169.1"/>
    <property type="molecule type" value="Genomic_DNA"/>
</dbReference>
<dbReference type="EMBL" id="AP008218">
    <property type="protein sequence ID" value="BAF29623.1"/>
    <property type="molecule type" value="Genomic_DNA"/>
</dbReference>
<dbReference type="EMBL" id="AP014968">
    <property type="protein sequence ID" value="BAT16784.1"/>
    <property type="molecule type" value="Genomic_DNA"/>
</dbReference>
<dbReference type="EMBL" id="CM000149">
    <property type="protein sequence ID" value="EEE53069.1"/>
    <property type="molecule type" value="Genomic_DNA"/>
</dbReference>
<dbReference type="PIR" id="JU0005">
    <property type="entry name" value="RKRZS6"/>
</dbReference>
<dbReference type="RefSeq" id="NP_001391658.1">
    <property type="nucleotide sequence ID" value="NM_001404729.1"/>
</dbReference>
<dbReference type="RefSeq" id="XP_015619408.1">
    <property type="nucleotide sequence ID" value="XM_015763922.1"/>
</dbReference>
<dbReference type="SMR" id="P18566"/>
<dbReference type="FunCoup" id="P18566">
    <property type="interactions" value="799"/>
</dbReference>
<dbReference type="STRING" id="39947.P18566"/>
<dbReference type="PaxDb" id="39947-P18566"/>
<dbReference type="EnsemblPlants" id="Os12t0291100-01">
    <property type="protein sequence ID" value="Os12t0291100-01"/>
    <property type="gene ID" value="Os12g0291100"/>
</dbReference>
<dbReference type="GeneID" id="4352014"/>
<dbReference type="Gramene" id="Os12t0291100-01">
    <property type="protein sequence ID" value="Os12t0291100-01"/>
    <property type="gene ID" value="Os12g0291100"/>
</dbReference>
<dbReference type="KEGG" id="dosa:Os12g0291100"/>
<dbReference type="eggNOG" id="ENOG502QT0M">
    <property type="taxonomic scope" value="Eukaryota"/>
</dbReference>
<dbReference type="HOGENOM" id="CLU_098114_1_0_1"/>
<dbReference type="InParanoid" id="P18566"/>
<dbReference type="OMA" id="RKNWVPC"/>
<dbReference type="OrthoDB" id="730667at2759"/>
<dbReference type="PlantReactome" id="R-OSA-1119312">
    <property type="pathway name" value="Photorespiration"/>
</dbReference>
<dbReference type="PlantReactome" id="R-OSA-1119519">
    <property type="pathway name" value="Calvin cycle"/>
</dbReference>
<dbReference type="CD-CODE" id="7F3F31A7">
    <property type="entry name" value="Synthetic Condensate 000171"/>
</dbReference>
<dbReference type="Proteomes" id="UP000000763">
    <property type="component" value="Chromosome 12"/>
</dbReference>
<dbReference type="Proteomes" id="UP000007752">
    <property type="component" value="Chromosome 12"/>
</dbReference>
<dbReference type="Proteomes" id="UP000059680">
    <property type="component" value="Chromosome 12"/>
</dbReference>
<dbReference type="ExpressionAtlas" id="P18566">
    <property type="expression patterns" value="baseline and differential"/>
</dbReference>
<dbReference type="GO" id="GO:0009507">
    <property type="term" value="C:chloroplast"/>
    <property type="evidence" value="ECO:0007669"/>
    <property type="project" value="UniProtKB-SubCell"/>
</dbReference>
<dbReference type="GO" id="GO:0016984">
    <property type="term" value="F:ribulose-bisphosphate carboxylase activity"/>
    <property type="evidence" value="ECO:0007669"/>
    <property type="project" value="UniProtKB-UniRule"/>
</dbReference>
<dbReference type="GO" id="GO:0009853">
    <property type="term" value="P:photorespiration"/>
    <property type="evidence" value="ECO:0007669"/>
    <property type="project" value="UniProtKB-KW"/>
</dbReference>
<dbReference type="GO" id="GO:0019253">
    <property type="term" value="P:reductive pentose-phosphate cycle"/>
    <property type="evidence" value="ECO:0007669"/>
    <property type="project" value="UniProtKB-UniRule"/>
</dbReference>
<dbReference type="CDD" id="cd03527">
    <property type="entry name" value="RuBisCO_small"/>
    <property type="match status" value="1"/>
</dbReference>
<dbReference type="FunFam" id="3.30.190.10:FF:000001">
    <property type="entry name" value="Ribulose bisphosphate carboxylase small chain, chloroplastic"/>
    <property type="match status" value="1"/>
</dbReference>
<dbReference type="Gene3D" id="3.30.190.10">
    <property type="entry name" value="Ribulose bisphosphate carboxylase, small subunit"/>
    <property type="match status" value="1"/>
</dbReference>
<dbReference type="HAMAP" id="MF_00859">
    <property type="entry name" value="RuBisCO_S_bact"/>
    <property type="match status" value="1"/>
</dbReference>
<dbReference type="InterPro" id="IPR024681">
    <property type="entry name" value="RuBisCO_ssu"/>
</dbReference>
<dbReference type="InterPro" id="IPR000894">
    <property type="entry name" value="RuBisCO_ssu_dom"/>
</dbReference>
<dbReference type="InterPro" id="IPR024680">
    <property type="entry name" value="RuBisCO_ssu_N"/>
</dbReference>
<dbReference type="InterPro" id="IPR036385">
    <property type="entry name" value="RuBisCO_ssu_sf"/>
</dbReference>
<dbReference type="PANTHER" id="PTHR31262">
    <property type="entry name" value="RIBULOSE BISPHOSPHATE CARBOXYLASE SMALL CHAIN 1, CHLOROPLASTIC"/>
    <property type="match status" value="1"/>
</dbReference>
<dbReference type="PANTHER" id="PTHR31262:SF10">
    <property type="entry name" value="RIBULOSE BISPHOSPHATE CARBOXYLASE SMALL SUBUNIT 1A, CHLOROPLASTIC-RELATED"/>
    <property type="match status" value="1"/>
</dbReference>
<dbReference type="Pfam" id="PF12338">
    <property type="entry name" value="RbcS"/>
    <property type="match status" value="1"/>
</dbReference>
<dbReference type="Pfam" id="PF00101">
    <property type="entry name" value="RuBisCO_small"/>
    <property type="match status" value="1"/>
</dbReference>
<dbReference type="PRINTS" id="PR00152">
    <property type="entry name" value="RUBISCOSMALL"/>
</dbReference>
<dbReference type="SMART" id="SM00961">
    <property type="entry name" value="RuBisCO_small"/>
    <property type="match status" value="1"/>
</dbReference>
<dbReference type="SUPFAM" id="SSF55239">
    <property type="entry name" value="RuBisCO, small subunit"/>
    <property type="match status" value="1"/>
</dbReference>
<comment type="function">
    <text evidence="1">RuBisCO catalyzes two reactions: the carboxylation of D-ribulose 1,5-bisphosphate, the primary event in carbon dioxide fixation, as well as the oxidative fragmentation of the pentose substrate. Both reactions occur simultaneously and in competition at the same active site. Although the small subunit is not catalytic it is essential for maximal activity.</text>
</comment>
<comment type="subunit">
    <text evidence="1">Heterohexadecamer of 8 large and 8 small subunits.</text>
</comment>
<comment type="subcellular location">
    <subcellularLocation>
        <location evidence="1">Plastid</location>
        <location evidence="1">Chloroplast</location>
    </subcellularLocation>
</comment>
<comment type="miscellaneous">
    <text evidence="1">The basic functional RuBisCO is composed of a large chain homodimer in a 'head-to-tail' conformation. In form I RuBisCO this homodimer is arranged in a barrel-like tetramer with the small subunits forming a tetrameric 'cap' on each end of the 'barrel'.</text>
</comment>
<comment type="similarity">
    <text evidence="1">Belongs to the RuBisCO small chain family.</text>
</comment>
<accession>P18566</accession>
<accession>Q0INU2</accession>
<accession>Q6SYB2</accession>